<name>SEPF_SYNE7</name>
<gene>
    <name evidence="1" type="primary">sepF</name>
    <name type="ordered locus">Synpcc7942_2059</name>
</gene>
<accession>Q31LI0</accession>
<protein>
    <recommendedName>
        <fullName evidence="1">Cell division protein SepF</fullName>
    </recommendedName>
</protein>
<comment type="function">
    <text evidence="1 3">Cell division protein that is part of the divisome complex and is recruited early to the Z-ring. Probably stimulates Z-ring formation, perhaps through the cross-linking of FtsZ protofilaments. Its function overlaps with FtsA.</text>
</comment>
<comment type="subunit">
    <text evidence="1">Homodimer. Interacts with FtsZ.</text>
</comment>
<comment type="subcellular location">
    <subcellularLocation>
        <location evidence="1">Cytoplasm</location>
    </subcellularLocation>
    <text evidence="1">Localizes to the division site, in a FtsZ-dependent manner.</text>
</comment>
<comment type="similarity">
    <text evidence="1">Belongs to the SepF family.</text>
</comment>
<proteinExistence type="evidence at protein level"/>
<feature type="chain" id="PRO_0000334128" description="Cell division protein SepF">
    <location>
        <begin position="1"/>
        <end position="191"/>
    </location>
</feature>
<feature type="region of interest" description="Disordered" evidence="2">
    <location>
        <begin position="157"/>
        <end position="191"/>
    </location>
</feature>
<feature type="compositionally biased region" description="Polar residues" evidence="2">
    <location>
        <begin position="157"/>
        <end position="178"/>
    </location>
</feature>
<evidence type="ECO:0000255" key="1">
    <source>
        <dbReference type="HAMAP-Rule" id="MF_01197"/>
    </source>
</evidence>
<evidence type="ECO:0000256" key="2">
    <source>
        <dbReference type="SAM" id="MobiDB-lite"/>
    </source>
</evidence>
<evidence type="ECO:0000269" key="3">
    <source>
    </source>
</evidence>
<reference key="1">
    <citation type="submission" date="2005-08" db="EMBL/GenBank/DDBJ databases">
        <title>Complete sequence of chromosome 1 of Synechococcus elongatus PCC 7942.</title>
        <authorList>
            <consortium name="US DOE Joint Genome Institute"/>
            <person name="Copeland A."/>
            <person name="Lucas S."/>
            <person name="Lapidus A."/>
            <person name="Barry K."/>
            <person name="Detter J.C."/>
            <person name="Glavina T."/>
            <person name="Hammon N."/>
            <person name="Israni S."/>
            <person name="Pitluck S."/>
            <person name="Schmutz J."/>
            <person name="Larimer F."/>
            <person name="Land M."/>
            <person name="Kyrpides N."/>
            <person name="Lykidis A."/>
            <person name="Golden S."/>
            <person name="Richardson P."/>
        </authorList>
    </citation>
    <scope>NUCLEOTIDE SEQUENCE [LARGE SCALE GENOMIC DNA]</scope>
    <source>
        <strain>ATCC 33912 / PCC 7942 / FACHB-805</strain>
    </source>
</reference>
<reference key="2">
    <citation type="journal article" date="2005" name="Mol. Microbiol.">
        <title>Identification of cyanobacterial cell division genes by comparative and mutational analyses.</title>
        <authorList>
            <person name="Miyagishima S.Y."/>
            <person name="Wolk C.P."/>
            <person name="Osteryoung K.W."/>
        </authorList>
    </citation>
    <scope>FUNCTION IN CELL DIVISION</scope>
</reference>
<dbReference type="EMBL" id="CP000100">
    <property type="protein sequence ID" value="ABB58089.1"/>
    <property type="molecule type" value="Genomic_DNA"/>
</dbReference>
<dbReference type="RefSeq" id="WP_011378295.1">
    <property type="nucleotide sequence ID" value="NZ_JACJTX010000001.1"/>
</dbReference>
<dbReference type="SMR" id="Q31LI0"/>
<dbReference type="STRING" id="1140.Synpcc7942_2059"/>
<dbReference type="PaxDb" id="1140-Synpcc7942_2059"/>
<dbReference type="KEGG" id="syf:Synpcc7942_2059"/>
<dbReference type="eggNOG" id="COG1799">
    <property type="taxonomic scope" value="Bacteria"/>
</dbReference>
<dbReference type="HOGENOM" id="CLU_078499_1_0_3"/>
<dbReference type="OrthoDB" id="9815206at2"/>
<dbReference type="BioCyc" id="SYNEL:SYNPCC7942_2059-MONOMER"/>
<dbReference type="Proteomes" id="UP000889800">
    <property type="component" value="Chromosome"/>
</dbReference>
<dbReference type="GO" id="GO:0005737">
    <property type="term" value="C:cytoplasm"/>
    <property type="evidence" value="ECO:0007669"/>
    <property type="project" value="UniProtKB-SubCell"/>
</dbReference>
<dbReference type="GO" id="GO:0000917">
    <property type="term" value="P:division septum assembly"/>
    <property type="evidence" value="ECO:0007669"/>
    <property type="project" value="UniProtKB-KW"/>
</dbReference>
<dbReference type="GO" id="GO:0043093">
    <property type="term" value="P:FtsZ-dependent cytokinesis"/>
    <property type="evidence" value="ECO:0007669"/>
    <property type="project" value="UniProtKB-UniRule"/>
</dbReference>
<dbReference type="Gene3D" id="3.30.110.150">
    <property type="entry name" value="SepF-like protein"/>
    <property type="match status" value="1"/>
</dbReference>
<dbReference type="HAMAP" id="MF_01197">
    <property type="entry name" value="SepF"/>
    <property type="match status" value="1"/>
</dbReference>
<dbReference type="InterPro" id="IPR023052">
    <property type="entry name" value="Cell_div_SepF"/>
</dbReference>
<dbReference type="InterPro" id="IPR007561">
    <property type="entry name" value="Cell_div_SepF/SepF-rel"/>
</dbReference>
<dbReference type="InterPro" id="IPR038594">
    <property type="entry name" value="SepF-like_sf"/>
</dbReference>
<dbReference type="PANTHER" id="PTHR35798">
    <property type="entry name" value="CELL DIVISION PROTEIN SEPF"/>
    <property type="match status" value="1"/>
</dbReference>
<dbReference type="PANTHER" id="PTHR35798:SF1">
    <property type="entry name" value="CELL DIVISION PROTEIN SEPF"/>
    <property type="match status" value="1"/>
</dbReference>
<dbReference type="Pfam" id="PF04472">
    <property type="entry name" value="SepF"/>
    <property type="match status" value="1"/>
</dbReference>
<keyword id="KW-0131">Cell cycle</keyword>
<keyword id="KW-0132">Cell division</keyword>
<keyword id="KW-0963">Cytoplasm</keyword>
<keyword id="KW-1185">Reference proteome</keyword>
<keyword id="KW-0717">Septation</keyword>
<organism>
    <name type="scientific">Synechococcus elongatus (strain ATCC 33912 / PCC 7942 / FACHB-805)</name>
    <name type="common">Anacystis nidulans R2</name>
    <dbReference type="NCBI Taxonomy" id="1140"/>
    <lineage>
        <taxon>Bacteria</taxon>
        <taxon>Bacillati</taxon>
        <taxon>Cyanobacteriota</taxon>
        <taxon>Cyanophyceae</taxon>
        <taxon>Synechococcales</taxon>
        <taxon>Synechococcaceae</taxon>
        <taxon>Synechococcus</taxon>
    </lineage>
</organism>
<sequence>MSFVNRIRDIVGLNESLDYDEEYETYDVAADSYNGYNDAAETSSRRRQRNHTPTASIEPVSTASNVIGLPGLSSSSEVVVMEPRSFEEMPQAIQALRERKTIVLNLTMMEPDQAQRAVDFVAGGTFAIDGHQERVGESIFLFTPSCVHVTTQGGEQYLNESPAQPVQTTTSFGRTATPTPAWGTDSRYAAQ</sequence>